<gene>
    <name type="primary">ihfA</name>
    <name type="synonym">hid</name>
    <name evidence="9" type="synonym">himA</name>
    <name type="ordered locus">b1712</name>
    <name type="ordered locus">JW1702</name>
</gene>
<keyword id="KW-0002">3D-structure</keyword>
<keyword id="KW-0184">Conjugation</keyword>
<keyword id="KW-0963">Cytoplasm</keyword>
<keyword id="KW-0903">Direct protein sequencing</keyword>
<keyword id="KW-0233">DNA recombination</keyword>
<keyword id="KW-0235">DNA replication</keyword>
<keyword id="KW-0238">DNA-binding</keyword>
<keyword id="KW-1185">Reference proteome</keyword>
<keyword id="KW-0804">Transcription</keyword>
<keyword id="KW-0805">Transcription regulation</keyword>
<keyword id="KW-0810">Translation regulation</keyword>
<sequence>MALTKAEMSEYLFDKLGLSKRDAKELVELFFEEIRRALENGEQVKLSGFGNFDLRDKNQRPGRNPKTGEDIPITARRVVTFRPGQKLKSRVENASPKDE</sequence>
<organism>
    <name type="scientific">Escherichia coli (strain K12)</name>
    <dbReference type="NCBI Taxonomy" id="83333"/>
    <lineage>
        <taxon>Bacteria</taxon>
        <taxon>Pseudomonadati</taxon>
        <taxon>Pseudomonadota</taxon>
        <taxon>Gammaproteobacteria</taxon>
        <taxon>Enterobacterales</taxon>
        <taxon>Enterobacteriaceae</taxon>
        <taxon>Escherichia</taxon>
    </lineage>
</organism>
<accession>P0A6X7</accession>
<accession>P06984</accession>
<reference key="1">
    <citation type="journal article" date="1984" name="Cold Spring Harb. Symp. Quant. Biol.">
        <title>Primary structure of the himA gene of Escherichia coli: homology with DNA-binding protein HU and association with the phenylalanyl-tRNA synthetase operon.</title>
        <authorList>
            <person name="Miller H.I."/>
        </authorList>
    </citation>
    <scope>NUCLEOTIDE SEQUENCE [GENOMIC DNA]</scope>
</reference>
<reference key="2">
    <citation type="submission" date="1985-08" db="EMBL/GenBank/DDBJ databases">
        <authorList>
            <person name="Miller H.I."/>
        </authorList>
    </citation>
    <scope>SEQUENCE REVISION</scope>
</reference>
<reference key="3">
    <citation type="journal article" date="1985" name="J. Bacteriol.">
        <title>Sequence of the Escherichia coli pheST operon and identification of the himA gene.</title>
        <authorList>
            <person name="Mechulman Y."/>
            <person name="Fayat G."/>
            <person name="Blanquet S."/>
        </authorList>
    </citation>
    <scope>NUCLEOTIDE SEQUENCE [GENOMIC DNA]</scope>
</reference>
<reference key="4">
    <citation type="journal article" date="1996" name="DNA Res.">
        <title>A 570-kb DNA sequence of the Escherichia coli K-12 genome corresponding to the 28.0-40.1 min region on the linkage map.</title>
        <authorList>
            <person name="Aiba H."/>
            <person name="Baba T."/>
            <person name="Fujita K."/>
            <person name="Hayashi K."/>
            <person name="Inada T."/>
            <person name="Isono K."/>
            <person name="Itoh T."/>
            <person name="Kasai H."/>
            <person name="Kashimoto K."/>
            <person name="Kimura S."/>
            <person name="Kitakawa M."/>
            <person name="Kitagawa M."/>
            <person name="Makino K."/>
            <person name="Miki T."/>
            <person name="Mizobuchi K."/>
            <person name="Mori H."/>
            <person name="Mori T."/>
            <person name="Motomura K."/>
            <person name="Nakade S."/>
            <person name="Nakamura Y."/>
            <person name="Nashimoto H."/>
            <person name="Nishio Y."/>
            <person name="Oshima T."/>
            <person name="Saito N."/>
            <person name="Sampei G."/>
            <person name="Seki Y."/>
            <person name="Sivasundaram S."/>
            <person name="Tagami H."/>
            <person name="Takeda J."/>
            <person name="Takemoto K."/>
            <person name="Takeuchi Y."/>
            <person name="Wada C."/>
            <person name="Yamamoto Y."/>
            <person name="Horiuchi T."/>
        </authorList>
    </citation>
    <scope>NUCLEOTIDE SEQUENCE [LARGE SCALE GENOMIC DNA]</scope>
    <source>
        <strain>K12 / W3110 / ATCC 27325 / DSM 5911</strain>
    </source>
</reference>
<reference key="5">
    <citation type="journal article" date="1997" name="Science">
        <title>The complete genome sequence of Escherichia coli K-12.</title>
        <authorList>
            <person name="Blattner F.R."/>
            <person name="Plunkett G. III"/>
            <person name="Bloch C.A."/>
            <person name="Perna N.T."/>
            <person name="Burland V."/>
            <person name="Riley M."/>
            <person name="Collado-Vides J."/>
            <person name="Glasner J.D."/>
            <person name="Rode C.K."/>
            <person name="Mayhew G.F."/>
            <person name="Gregor J."/>
            <person name="Davis N.W."/>
            <person name="Kirkpatrick H.A."/>
            <person name="Goeden M.A."/>
            <person name="Rose D.J."/>
            <person name="Mau B."/>
            <person name="Shao Y."/>
        </authorList>
    </citation>
    <scope>NUCLEOTIDE SEQUENCE [LARGE SCALE GENOMIC DNA]</scope>
    <source>
        <strain>K12 / MG1655 / ATCC 47076</strain>
    </source>
</reference>
<reference key="6">
    <citation type="journal article" date="2006" name="Mol. Syst. Biol.">
        <title>Highly accurate genome sequences of Escherichia coli K-12 strains MG1655 and W3110.</title>
        <authorList>
            <person name="Hayashi K."/>
            <person name="Morooka N."/>
            <person name="Yamamoto Y."/>
            <person name="Fujita K."/>
            <person name="Isono K."/>
            <person name="Choi S."/>
            <person name="Ohtsubo E."/>
            <person name="Baba T."/>
            <person name="Wanner B.L."/>
            <person name="Mori H."/>
            <person name="Horiuchi T."/>
        </authorList>
    </citation>
    <scope>NUCLEOTIDE SEQUENCE [LARGE SCALE GENOMIC DNA]</scope>
    <source>
        <strain>K12 / W3110 / ATCC 27325 / DSM 5911</strain>
    </source>
</reference>
<reference key="7">
    <citation type="journal article" date="1986" name="J. Bacteriol.">
        <title>Nucleotide sequence of the btuCED genes involved in vitamin B12 transport in Escherichia coli and homology with components of periplasmic-binding-protein-dependent transport systems.</title>
        <authorList>
            <person name="Friedrich M.J."/>
            <person name="Deveaux L.C."/>
            <person name="Kadner R.J."/>
        </authorList>
    </citation>
    <scope>NUCLEOTIDE SEQUENCE [GENOMIC DNA] OF 83-99</scope>
</reference>
<reference key="8">
    <citation type="journal article" date="1998" name="FEMS Microbiol. Lett.">
        <title>Small genes/gene-products in Escherichia coli K-12.</title>
        <authorList>
            <person name="Wasinger V.C."/>
            <person name="Humphery-Smith I."/>
        </authorList>
    </citation>
    <scope>PROTEIN SEQUENCE OF 2-11</scope>
    <source>
        <strain>K12</strain>
    </source>
</reference>
<reference key="9">
    <citation type="journal article" date="1992" name="EMBO J.">
        <title>The isolation and characterization of mutants of the integration host factor (IHF) of Escherichia coli with altered, expanded DNA-binding specificities.</title>
        <authorList>
            <person name="Lee E.C."/>
            <person name="Hales L.M."/>
            <person name="Gumport R.I."/>
            <person name="Gardner J.F."/>
        </authorList>
    </citation>
    <scope>MUTAGENESIS OF PRO-65 AND LYS-66</scope>
</reference>
<reference key="10">
    <citation type="journal article" date="1995" name="J. Biol. Chem.">
        <title>The traY gene product and integration host factor stimulate Escherichia coli DNA helicase I-catalyzed nicking at the F plasmid oriT.</title>
        <authorList>
            <person name="Nelson W.C."/>
            <person name="Howard M.T."/>
            <person name="Sherman J.A."/>
            <person name="Matson S.W."/>
        </authorList>
    </citation>
    <scope>FUNCTION IN CONJUGATION</scope>
    <scope>FUNCTION IN F PLASMID NICKING</scope>
</reference>
<reference key="11">
    <citation type="journal article" date="1995" name="J. Biol. Chem.">
        <title>Stepwise assembly of a relaxosome at the F plasmid origin of transfer.</title>
        <authorList>
            <person name="Howard M.T."/>
            <person name="Nelson W.C."/>
            <person name="Matson S.W."/>
        </authorList>
    </citation>
    <scope>CHARACTERIZATION OF RELAXOSOME ASSEMBLY ORDER</scope>
    <scope>SUBUNIT</scope>
</reference>
<reference key="12">
    <citation type="journal article" date="1997" name="Electrophoresis">
        <title>Escherichia coli proteome analysis using the gene-protein database.</title>
        <authorList>
            <person name="VanBogelen R.A."/>
            <person name="Abshire K.Z."/>
            <person name="Moldover B."/>
            <person name="Olson E.R."/>
            <person name="Neidhardt F.C."/>
        </authorList>
    </citation>
    <scope>IDENTIFICATION BY 2D-GEL</scope>
</reference>
<reference key="13">
    <citation type="journal article" date="2006" name="Nucleic Acids Res.">
        <title>Association of nucleoid proteins with coding and non-coding segments of the Escherichia coli genome.</title>
        <authorList>
            <person name="Grainger D.C."/>
            <person name="Hurd D."/>
            <person name="Goldberg M.D."/>
            <person name="Busby S.J."/>
        </authorList>
    </citation>
    <scope>FUNCTION</scope>
    <scope>DNA-BINDING</scope>
    <source>
        <strain>K12 / MG1655 / ATCC 47076</strain>
    </source>
</reference>
<reference key="14">
    <citation type="journal article" date="2007" name="Mol. Microbiol.">
        <title>The F plasmid-encoded TraM protein stimulates relaxosome-mediated cleavage at oriT through an interaction with TraI.</title>
        <authorList>
            <person name="Ragonese H."/>
            <person name="Haisch D."/>
            <person name="Villareal E."/>
            <person name="Choi J.H."/>
            <person name="Matson S.W."/>
        </authorList>
    </citation>
    <scope>FUNCTION IN CONJUGATION</scope>
    <scope>DNA-BINDING</scope>
    <scope>SUBUNIT</scope>
</reference>
<reference key="15">
    <citation type="journal article" date="2011" name="Science">
        <title>Chromosome organization by a nucleoid-associated protein in live bacteria.</title>
        <authorList>
            <person name="Wang W."/>
            <person name="Li G.W."/>
            <person name="Chen C."/>
            <person name="Xie X.S."/>
            <person name="Zhuang X."/>
        </authorList>
    </citation>
    <scope>SUBCELLULAR LOCATION</scope>
    <source>
        <strain>K12 / BW25993</strain>
    </source>
</reference>
<reference key="16">
    <citation type="journal article" date="2013" name="Proc. Natl. Acad. Sci. U.S.A.">
        <title>DnaA binding locus datA promotes DnaA-ATP hydrolysis to enable cell cycle-coordinated replication initiation.</title>
        <authorList>
            <person name="Kasho K."/>
            <person name="Katayama T."/>
        </authorList>
    </citation>
    <scope>FUNCTION IN REPLICATION INITIATION</scope>
    <scope>DISRUPTION PHENOTYPE</scope>
    <scope>DNA-BINDING</scope>
    <source>
        <strain>K12 / MG1655 / ATCC 47076</strain>
    </source>
</reference>
<reference key="17">
    <citation type="journal article" date="1996" name="Cell">
        <title>Crystal structure of an IHF-DNA complex: a protein-induced DNA U-turn.</title>
        <authorList>
            <person name="Rice P.A."/>
            <person name="Yang S."/>
            <person name="Mizuuchi K."/>
            <person name="Nash H.A."/>
        </authorList>
    </citation>
    <scope>X-RAY CRYSTALLOGRAPHY (2.5 ANGSTROMS)</scope>
</reference>
<comment type="function">
    <text evidence="3 6">One of the 2 subunits of integration host factor (IHF), a specific DNA-binding protein that functions in genetic recombination as well as in transcriptional and translational control. Binds to hundreds of transcriptionally inactive, AT-rich DNA sites, approximately half its binding sites are in non-coding DNA, which only accounts for about 10% of the genome (PubMed:16963779). IHF in combination with the datA locus promotes ATP hydrolysis of ATP-DnaA, called DDAH (datA-dependent DnaA-ATP hydrolysis) (PubMed:23277577). IHF binds oriC as replication initiates, dissociates within minutes and slowly reassociates during the cell cyle; IHF binding to datA is low before initiation, rises after initiation and dissociates during the cell cycle, allowing IHF to coordinate replication initiation (PubMed:23277577).</text>
</comment>
<comment type="function">
    <text>Plays a crucial role in the lysogenic life cycle of bacteriophage lambda, as it is required not only in the recombination reaction, which inserts lambda DNA into the E.coli chromosome, but also for the synthesis of int and cI repressor, two phage proteins necessary for DNA insertion and repression, respectively. The synthesis of int and cI proteins is regulated indirectly by IHF via translational control of the lambda cII protein.</text>
</comment>
<comment type="function">
    <text>Has an essential role in conjugative DNA transfer (CDT), the unidirectional transfer of ssDNA plasmid from a donor to a recipient cell. It is the central mechanism by which antibiotic resistance and virulence factors are propagated in bacterial populations. Part of the relaxosome, which facilitates a site- and strand-specific cut in the origin of transfer by TraI, at the nic site. Relaxosome formation requires binding of IHF and TraY to the oriT region, which then facilitates binding of TraI.</text>
</comment>
<comment type="subunit">
    <text evidence="4 7">Heterodimer of an alpha and a beta chain. Part of the relaxosome, a complex composed of plasmid-encoded TraI, TraM, TraY and host-encoded IHF bound to the F plasmid origin of transfer (oriT).</text>
</comment>
<comment type="subcellular location">
    <subcellularLocation>
        <location evidence="5">Cytoplasm</location>
        <location evidence="5">Nucleoid</location>
    </subcellularLocation>
    <text evidence="5">Scattered throughout the nucleoid (PubMed:21903814).</text>
</comment>
<comment type="disruption phenotype">
    <text evidence="6">Increased in vivo levels of ATP-DnaA.</text>
</comment>
<comment type="similarity">
    <text evidence="10">Belongs to the bacterial histone-like protein family.</text>
</comment>
<evidence type="ECO:0000256" key="1">
    <source>
        <dbReference type="SAM" id="MobiDB-lite"/>
    </source>
</evidence>
<evidence type="ECO:0000269" key="2">
    <source>
    </source>
</evidence>
<evidence type="ECO:0000269" key="3">
    <source>
    </source>
</evidence>
<evidence type="ECO:0000269" key="4">
    <source>
    </source>
</evidence>
<evidence type="ECO:0000269" key="5">
    <source>
    </source>
</evidence>
<evidence type="ECO:0000269" key="6">
    <source>
    </source>
</evidence>
<evidence type="ECO:0000269" key="7">
    <source>
    </source>
</evidence>
<evidence type="ECO:0000269" key="8">
    <source>
    </source>
</evidence>
<evidence type="ECO:0000303" key="9">
    <source>
    </source>
</evidence>
<evidence type="ECO:0000305" key="10"/>
<evidence type="ECO:0007829" key="11">
    <source>
        <dbReference type="PDB" id="1OWF"/>
    </source>
</evidence>
<dbReference type="EMBL" id="K02844">
    <property type="protein sequence ID" value="AAA51471.1"/>
    <property type="molecule type" value="Genomic_DNA"/>
</dbReference>
<dbReference type="EMBL" id="V00291">
    <property type="protein sequence ID" value="CAA23566.1"/>
    <property type="molecule type" value="Genomic_DNA"/>
</dbReference>
<dbReference type="EMBL" id="U00096">
    <property type="protein sequence ID" value="AAC74782.1"/>
    <property type="molecule type" value="Genomic_DNA"/>
</dbReference>
<dbReference type="EMBL" id="AP009048">
    <property type="protein sequence ID" value="BAA15480.1"/>
    <property type="molecule type" value="Genomic_DNA"/>
</dbReference>
<dbReference type="EMBL" id="M14031">
    <property type="protein sequence ID" value="AAA23525.1"/>
    <property type="molecule type" value="Genomic_DNA"/>
</dbReference>
<dbReference type="PIR" id="C23099">
    <property type="entry name" value="IQECAA"/>
</dbReference>
<dbReference type="RefSeq" id="NP_416227.1">
    <property type="nucleotide sequence ID" value="NC_000913.3"/>
</dbReference>
<dbReference type="RefSeq" id="WP_001229265.1">
    <property type="nucleotide sequence ID" value="NZ_STEB01000009.1"/>
</dbReference>
<dbReference type="PDB" id="1IHF">
    <property type="method" value="X-ray"/>
    <property type="resolution" value="2.20 A"/>
    <property type="chains" value="A=1-99"/>
</dbReference>
<dbReference type="PDB" id="1OUZ">
    <property type="method" value="X-ray"/>
    <property type="resolution" value="2.41 A"/>
    <property type="chains" value="A=1-99"/>
</dbReference>
<dbReference type="PDB" id="1OWF">
    <property type="method" value="X-ray"/>
    <property type="resolution" value="1.95 A"/>
    <property type="chains" value="A=1-99"/>
</dbReference>
<dbReference type="PDB" id="1OWG">
    <property type="method" value="X-ray"/>
    <property type="resolution" value="2.10 A"/>
    <property type="chains" value="A=1-99"/>
</dbReference>
<dbReference type="PDB" id="2HT0">
    <property type="method" value="X-ray"/>
    <property type="resolution" value="2.00 A"/>
    <property type="chains" value="A=1-99"/>
</dbReference>
<dbReference type="PDB" id="2IIE">
    <property type="method" value="X-ray"/>
    <property type="resolution" value="2.41 A"/>
    <property type="chains" value="A=3-94"/>
</dbReference>
<dbReference type="PDB" id="2IIF">
    <property type="method" value="X-ray"/>
    <property type="resolution" value="2.72 A"/>
    <property type="chains" value="A=3-94"/>
</dbReference>
<dbReference type="PDB" id="5J0N">
    <property type="method" value="EM"/>
    <property type="resolution" value="11.00 A"/>
    <property type="chains" value="I/K=2-97"/>
</dbReference>
<dbReference type="PDB" id="5WFE">
    <property type="method" value="EM"/>
    <property type="resolution" value="3.64 A"/>
    <property type="chains" value="K=1-99"/>
</dbReference>
<dbReference type="PDBsum" id="1IHF"/>
<dbReference type="PDBsum" id="1OUZ"/>
<dbReference type="PDBsum" id="1OWF"/>
<dbReference type="PDBsum" id="1OWG"/>
<dbReference type="PDBsum" id="2HT0"/>
<dbReference type="PDBsum" id="2IIE"/>
<dbReference type="PDBsum" id="2IIF"/>
<dbReference type="PDBsum" id="5J0N"/>
<dbReference type="PDBsum" id="5WFE"/>
<dbReference type="SMR" id="P0A6X7"/>
<dbReference type="BioGRID" id="4260284">
    <property type="interactions" value="277"/>
</dbReference>
<dbReference type="BioGRID" id="849846">
    <property type="interactions" value="3"/>
</dbReference>
<dbReference type="ComplexPortal" id="CPX-1957">
    <property type="entry name" value="Integration host factor complex"/>
</dbReference>
<dbReference type="DIP" id="DIP-36031N"/>
<dbReference type="FunCoup" id="P0A6X7">
    <property type="interactions" value="302"/>
</dbReference>
<dbReference type="IntAct" id="P0A6X7">
    <property type="interactions" value="24"/>
</dbReference>
<dbReference type="STRING" id="511145.b1712"/>
<dbReference type="jPOST" id="P0A6X7"/>
<dbReference type="PaxDb" id="511145-b1712"/>
<dbReference type="EnsemblBacteria" id="AAC74782">
    <property type="protein sequence ID" value="AAC74782"/>
    <property type="gene ID" value="b1712"/>
</dbReference>
<dbReference type="GeneID" id="93775925"/>
<dbReference type="GeneID" id="945472"/>
<dbReference type="KEGG" id="ecj:JW1702"/>
<dbReference type="KEGG" id="eco:b1712"/>
<dbReference type="KEGG" id="ecoc:C3026_09800"/>
<dbReference type="PATRIC" id="fig|1411691.4.peg.545"/>
<dbReference type="EchoBASE" id="EB0435"/>
<dbReference type="eggNOG" id="COG0776">
    <property type="taxonomic scope" value="Bacteria"/>
</dbReference>
<dbReference type="HOGENOM" id="CLU_105066_1_3_6"/>
<dbReference type="InParanoid" id="P0A6X7"/>
<dbReference type="OMA" id="EMLFDQV"/>
<dbReference type="OrthoDB" id="9797747at2"/>
<dbReference type="PhylomeDB" id="P0A6X7"/>
<dbReference type="BioCyc" id="EcoCyc:PD00347"/>
<dbReference type="EvolutionaryTrace" id="P0A6X7"/>
<dbReference type="PRO" id="PR:P0A6X7"/>
<dbReference type="Proteomes" id="UP000000625">
    <property type="component" value="Chromosome"/>
</dbReference>
<dbReference type="CollecTF" id="EXPREG_00000780"/>
<dbReference type="GO" id="GO:0005829">
    <property type="term" value="C:cytosol"/>
    <property type="evidence" value="ECO:0000314"/>
    <property type="project" value="EcoCyc"/>
</dbReference>
<dbReference type="GO" id="GO:1990177">
    <property type="term" value="C:IHF-DNA complex"/>
    <property type="evidence" value="ECO:0000353"/>
    <property type="project" value="ComplexPortal"/>
</dbReference>
<dbReference type="GO" id="GO:0032993">
    <property type="term" value="C:protein-DNA complex"/>
    <property type="evidence" value="ECO:0000353"/>
    <property type="project" value="CollecTF"/>
</dbReference>
<dbReference type="GO" id="GO:0003677">
    <property type="term" value="F:DNA binding"/>
    <property type="evidence" value="ECO:0000318"/>
    <property type="project" value="GO_Central"/>
</dbReference>
<dbReference type="GO" id="GO:0001216">
    <property type="term" value="F:DNA-binding transcription activator activity"/>
    <property type="evidence" value="ECO:0000353"/>
    <property type="project" value="CollecTF"/>
</dbReference>
<dbReference type="GO" id="GO:0030527">
    <property type="term" value="F:structural constituent of chromatin"/>
    <property type="evidence" value="ECO:0007669"/>
    <property type="project" value="InterPro"/>
</dbReference>
<dbReference type="GO" id="GO:0000976">
    <property type="term" value="F:transcription cis-regulatory region binding"/>
    <property type="evidence" value="ECO:0000353"/>
    <property type="project" value="CollecTF"/>
</dbReference>
<dbReference type="GO" id="GO:0006310">
    <property type="term" value="P:DNA recombination"/>
    <property type="evidence" value="ECO:0007669"/>
    <property type="project" value="UniProtKB-UniRule"/>
</dbReference>
<dbReference type="GO" id="GO:0006260">
    <property type="term" value="P:DNA replication"/>
    <property type="evidence" value="ECO:0007669"/>
    <property type="project" value="UniProtKB-KW"/>
</dbReference>
<dbReference type="GO" id="GO:0006351">
    <property type="term" value="P:DNA-templated transcription"/>
    <property type="evidence" value="ECO:0000314"/>
    <property type="project" value="EcoCyc"/>
</dbReference>
<dbReference type="GO" id="GO:0006417">
    <property type="term" value="P:regulation of translation"/>
    <property type="evidence" value="ECO:0000303"/>
    <property type="project" value="ComplexPortal"/>
</dbReference>
<dbReference type="CDD" id="cd13835">
    <property type="entry name" value="IHF_A"/>
    <property type="match status" value="1"/>
</dbReference>
<dbReference type="FunFam" id="4.10.520.10:FF:000002">
    <property type="entry name" value="Integration host factor subunit alpha"/>
    <property type="match status" value="1"/>
</dbReference>
<dbReference type="Gene3D" id="4.10.520.10">
    <property type="entry name" value="IHF-like DNA-binding proteins"/>
    <property type="match status" value="1"/>
</dbReference>
<dbReference type="HAMAP" id="MF_00380">
    <property type="entry name" value="IHF_alpha"/>
    <property type="match status" value="1"/>
</dbReference>
<dbReference type="InterPro" id="IPR000119">
    <property type="entry name" value="Hist_DNA-bd"/>
</dbReference>
<dbReference type="InterPro" id="IPR020816">
    <property type="entry name" value="Histone-like_DNA-bd_CS"/>
</dbReference>
<dbReference type="InterPro" id="IPR010992">
    <property type="entry name" value="IHF-like_DNA-bd_dom_sf"/>
</dbReference>
<dbReference type="InterPro" id="IPR005684">
    <property type="entry name" value="IHF_alpha"/>
</dbReference>
<dbReference type="NCBIfam" id="TIGR00987">
    <property type="entry name" value="himA"/>
    <property type="match status" value="1"/>
</dbReference>
<dbReference type="NCBIfam" id="NF001401">
    <property type="entry name" value="PRK00285.1"/>
    <property type="match status" value="1"/>
</dbReference>
<dbReference type="PANTHER" id="PTHR33175">
    <property type="entry name" value="DNA-BINDING PROTEIN HU"/>
    <property type="match status" value="1"/>
</dbReference>
<dbReference type="PANTHER" id="PTHR33175:SF2">
    <property type="entry name" value="INTEGRATION HOST FACTOR SUBUNIT ALPHA"/>
    <property type="match status" value="1"/>
</dbReference>
<dbReference type="Pfam" id="PF00216">
    <property type="entry name" value="Bac_DNA_binding"/>
    <property type="match status" value="1"/>
</dbReference>
<dbReference type="PRINTS" id="PR01727">
    <property type="entry name" value="DNABINDINGHU"/>
</dbReference>
<dbReference type="SMART" id="SM00411">
    <property type="entry name" value="BHL"/>
    <property type="match status" value="1"/>
</dbReference>
<dbReference type="SUPFAM" id="SSF47729">
    <property type="entry name" value="IHF-like DNA-binding proteins"/>
    <property type="match status" value="1"/>
</dbReference>
<dbReference type="PROSITE" id="PS00045">
    <property type="entry name" value="HISTONE_LIKE"/>
    <property type="match status" value="1"/>
</dbReference>
<name>IHFA_ECOLI</name>
<protein>
    <recommendedName>
        <fullName>Integration host factor subunit alpha</fullName>
        <shortName>IHF-alpha</shortName>
    </recommendedName>
</protein>
<proteinExistence type="evidence at protein level"/>
<feature type="initiator methionine" description="Removed" evidence="8">
    <location>
        <position position="1"/>
    </location>
</feature>
<feature type="chain" id="PRO_0000105005" description="Integration host factor subunit alpha">
    <location>
        <begin position="2"/>
        <end position="99"/>
    </location>
</feature>
<feature type="region of interest" description="Disordered" evidence="1">
    <location>
        <begin position="49"/>
        <end position="73"/>
    </location>
</feature>
<feature type="mutagenesis site" description="Alters DNA-binding specificity." evidence="2">
    <original>P</original>
    <variation>L</variation>
    <location>
        <position position="65"/>
    </location>
</feature>
<feature type="mutagenesis site" description="Alters DNA-binding specificity." evidence="2">
    <original>K</original>
    <variation>S</variation>
    <location>
        <position position="66"/>
    </location>
</feature>
<feature type="helix" evidence="11">
    <location>
        <begin position="5"/>
        <end position="16"/>
    </location>
</feature>
<feature type="helix" evidence="11">
    <location>
        <begin position="20"/>
        <end position="39"/>
    </location>
</feature>
<feature type="strand" evidence="11">
    <location>
        <begin position="44"/>
        <end position="46"/>
    </location>
</feature>
<feature type="turn" evidence="11">
    <location>
        <begin position="47"/>
        <end position="49"/>
    </location>
</feature>
<feature type="strand" evidence="11">
    <location>
        <begin position="50"/>
        <end position="57"/>
    </location>
</feature>
<feature type="strand" evidence="11">
    <location>
        <begin position="60"/>
        <end position="63"/>
    </location>
</feature>
<feature type="strand" evidence="11">
    <location>
        <begin position="65"/>
        <end position="67"/>
    </location>
</feature>
<feature type="strand" evidence="11">
    <location>
        <begin position="70"/>
        <end position="73"/>
    </location>
</feature>
<feature type="strand" evidence="11">
    <location>
        <begin position="76"/>
        <end position="83"/>
    </location>
</feature>
<feature type="helix" evidence="11">
    <location>
        <begin position="85"/>
        <end position="92"/>
    </location>
</feature>